<dbReference type="EC" id="6.3.2.4" evidence="2"/>
<dbReference type="EMBL" id="CU633749">
    <property type="protein sequence ID" value="CAQ70657.1"/>
    <property type="molecule type" value="Genomic_DNA"/>
</dbReference>
<dbReference type="RefSeq" id="WP_012353952.1">
    <property type="nucleotide sequence ID" value="NC_010528.1"/>
</dbReference>
<dbReference type="SMR" id="B3R6V7"/>
<dbReference type="GeneID" id="29762356"/>
<dbReference type="KEGG" id="cti:RALTA_A2727"/>
<dbReference type="eggNOG" id="COG1181">
    <property type="taxonomic scope" value="Bacteria"/>
</dbReference>
<dbReference type="HOGENOM" id="CLU_039268_1_2_4"/>
<dbReference type="BioCyc" id="CTAI977880:RALTA_RS13270-MONOMER"/>
<dbReference type="UniPathway" id="UPA00219"/>
<dbReference type="Proteomes" id="UP000001692">
    <property type="component" value="Chromosome 1"/>
</dbReference>
<dbReference type="GO" id="GO:0005829">
    <property type="term" value="C:cytosol"/>
    <property type="evidence" value="ECO:0007669"/>
    <property type="project" value="TreeGrafter"/>
</dbReference>
<dbReference type="GO" id="GO:0005524">
    <property type="term" value="F:ATP binding"/>
    <property type="evidence" value="ECO:0007669"/>
    <property type="project" value="UniProtKB-KW"/>
</dbReference>
<dbReference type="GO" id="GO:0008716">
    <property type="term" value="F:D-alanine-D-alanine ligase activity"/>
    <property type="evidence" value="ECO:0007669"/>
    <property type="project" value="UniProtKB-UniRule"/>
</dbReference>
<dbReference type="GO" id="GO:0046872">
    <property type="term" value="F:metal ion binding"/>
    <property type="evidence" value="ECO:0007669"/>
    <property type="project" value="UniProtKB-KW"/>
</dbReference>
<dbReference type="GO" id="GO:0071555">
    <property type="term" value="P:cell wall organization"/>
    <property type="evidence" value="ECO:0007669"/>
    <property type="project" value="UniProtKB-KW"/>
</dbReference>
<dbReference type="GO" id="GO:0009252">
    <property type="term" value="P:peptidoglycan biosynthetic process"/>
    <property type="evidence" value="ECO:0007669"/>
    <property type="project" value="UniProtKB-UniRule"/>
</dbReference>
<dbReference type="GO" id="GO:0008360">
    <property type="term" value="P:regulation of cell shape"/>
    <property type="evidence" value="ECO:0007669"/>
    <property type="project" value="UniProtKB-KW"/>
</dbReference>
<dbReference type="FunFam" id="3.30.470.20:FF:000008">
    <property type="entry name" value="D-alanine--D-alanine ligase"/>
    <property type="match status" value="1"/>
</dbReference>
<dbReference type="FunFam" id="3.40.50.20:FF:000013">
    <property type="entry name" value="D-alanine--D-alanine ligase"/>
    <property type="match status" value="1"/>
</dbReference>
<dbReference type="Gene3D" id="3.40.50.20">
    <property type="match status" value="1"/>
</dbReference>
<dbReference type="Gene3D" id="3.30.1490.20">
    <property type="entry name" value="ATP-grasp fold, A domain"/>
    <property type="match status" value="1"/>
</dbReference>
<dbReference type="Gene3D" id="3.30.470.20">
    <property type="entry name" value="ATP-grasp fold, B domain"/>
    <property type="match status" value="1"/>
</dbReference>
<dbReference type="HAMAP" id="MF_00047">
    <property type="entry name" value="Dala_Dala_lig"/>
    <property type="match status" value="1"/>
</dbReference>
<dbReference type="InterPro" id="IPR011761">
    <property type="entry name" value="ATP-grasp"/>
</dbReference>
<dbReference type="InterPro" id="IPR013815">
    <property type="entry name" value="ATP_grasp_subdomain_1"/>
</dbReference>
<dbReference type="InterPro" id="IPR000291">
    <property type="entry name" value="D-Ala_lig_Van_CS"/>
</dbReference>
<dbReference type="InterPro" id="IPR005905">
    <property type="entry name" value="D_ala_D_ala"/>
</dbReference>
<dbReference type="InterPro" id="IPR011095">
    <property type="entry name" value="Dala_Dala_lig_C"/>
</dbReference>
<dbReference type="InterPro" id="IPR011127">
    <property type="entry name" value="Dala_Dala_lig_N"/>
</dbReference>
<dbReference type="InterPro" id="IPR016185">
    <property type="entry name" value="PreATP-grasp_dom_sf"/>
</dbReference>
<dbReference type="NCBIfam" id="TIGR01205">
    <property type="entry name" value="D_ala_D_alaTIGR"/>
    <property type="match status" value="1"/>
</dbReference>
<dbReference type="NCBIfam" id="NF002378">
    <property type="entry name" value="PRK01372.1"/>
    <property type="match status" value="1"/>
</dbReference>
<dbReference type="PANTHER" id="PTHR23132">
    <property type="entry name" value="D-ALANINE--D-ALANINE LIGASE"/>
    <property type="match status" value="1"/>
</dbReference>
<dbReference type="PANTHER" id="PTHR23132:SF23">
    <property type="entry name" value="D-ALANINE--D-ALANINE LIGASE B"/>
    <property type="match status" value="1"/>
</dbReference>
<dbReference type="Pfam" id="PF07478">
    <property type="entry name" value="Dala_Dala_lig_C"/>
    <property type="match status" value="1"/>
</dbReference>
<dbReference type="Pfam" id="PF01820">
    <property type="entry name" value="Dala_Dala_lig_N"/>
    <property type="match status" value="1"/>
</dbReference>
<dbReference type="PIRSF" id="PIRSF039102">
    <property type="entry name" value="Ddl/VanB"/>
    <property type="match status" value="1"/>
</dbReference>
<dbReference type="SUPFAM" id="SSF56059">
    <property type="entry name" value="Glutathione synthetase ATP-binding domain-like"/>
    <property type="match status" value="1"/>
</dbReference>
<dbReference type="SUPFAM" id="SSF52440">
    <property type="entry name" value="PreATP-grasp domain"/>
    <property type="match status" value="1"/>
</dbReference>
<dbReference type="PROSITE" id="PS50975">
    <property type="entry name" value="ATP_GRASP"/>
    <property type="match status" value="1"/>
</dbReference>
<dbReference type="PROSITE" id="PS00843">
    <property type="entry name" value="DALA_DALA_LIGASE_1"/>
    <property type="match status" value="1"/>
</dbReference>
<dbReference type="PROSITE" id="PS00844">
    <property type="entry name" value="DALA_DALA_LIGASE_2"/>
    <property type="match status" value="1"/>
</dbReference>
<name>DDL_CUPTR</name>
<feature type="chain" id="PRO_1000091179" description="D-alanine--D-alanine ligase">
    <location>
        <begin position="1"/>
        <end position="327"/>
    </location>
</feature>
<feature type="domain" description="ATP-grasp" evidence="2">
    <location>
        <begin position="113"/>
        <end position="312"/>
    </location>
</feature>
<feature type="binding site" evidence="2">
    <location>
        <begin position="139"/>
        <end position="194"/>
    </location>
    <ligand>
        <name>ATP</name>
        <dbReference type="ChEBI" id="CHEBI:30616"/>
    </ligand>
</feature>
<feature type="binding site" evidence="2">
    <location>
        <position position="266"/>
    </location>
    <ligand>
        <name>Mg(2+)</name>
        <dbReference type="ChEBI" id="CHEBI:18420"/>
        <label>1</label>
    </ligand>
</feature>
<feature type="binding site" evidence="2">
    <location>
        <position position="279"/>
    </location>
    <ligand>
        <name>Mg(2+)</name>
        <dbReference type="ChEBI" id="CHEBI:18420"/>
        <label>1</label>
    </ligand>
</feature>
<feature type="binding site" evidence="2">
    <location>
        <position position="279"/>
    </location>
    <ligand>
        <name>Mg(2+)</name>
        <dbReference type="ChEBI" id="CHEBI:18420"/>
        <label>2</label>
    </ligand>
</feature>
<feature type="binding site" evidence="2">
    <location>
        <position position="281"/>
    </location>
    <ligand>
        <name>Mg(2+)</name>
        <dbReference type="ChEBI" id="CHEBI:18420"/>
        <label>2</label>
    </ligand>
</feature>
<sequence>MSFVAHPNIDPRSLGKVGVLLGGRSAEREISLMSGNGVLAALQSRGVDAHGFDPGLQGVAELAAAGFDRVFIALHGRYGEDGTIQGLLEQLGVPYTGSGVLASALAMDKQATKRLWMTHGLATPRFAMLHADTDFDAVVADLGLPLIVKPAREGSSIGLTKVTAADQMRAAFDKAAALDNDVIAETFVDGAELTCPVVGEGDTAEALPVIRIVAPEANYDYQNKYFTDDTQYLCPSGLDAEVERQVQALAVQAYRVLGCRGWARADVMLRADGTPFLLEMNTSPGMTGHSLVPMAARAVGISYEDFVLQVLAAATLDLHPNEHWKPE</sequence>
<organism>
    <name type="scientific">Cupriavidus taiwanensis (strain DSM 17343 / BCRC 17206 / CCUG 44338 / CIP 107171 / LMG 19424 / R1)</name>
    <name type="common">Ralstonia taiwanensis (strain LMG 19424)</name>
    <dbReference type="NCBI Taxonomy" id="977880"/>
    <lineage>
        <taxon>Bacteria</taxon>
        <taxon>Pseudomonadati</taxon>
        <taxon>Pseudomonadota</taxon>
        <taxon>Betaproteobacteria</taxon>
        <taxon>Burkholderiales</taxon>
        <taxon>Burkholderiaceae</taxon>
        <taxon>Cupriavidus</taxon>
    </lineage>
</organism>
<protein>
    <recommendedName>
        <fullName evidence="2">D-alanine--D-alanine ligase</fullName>
        <ecNumber evidence="2">6.3.2.4</ecNumber>
    </recommendedName>
    <alternativeName>
        <fullName evidence="2">D-Ala-D-Ala ligase</fullName>
    </alternativeName>
    <alternativeName>
        <fullName evidence="2">D-alanylalanine synthetase</fullName>
    </alternativeName>
</protein>
<evidence type="ECO:0000250" key="1"/>
<evidence type="ECO:0000255" key="2">
    <source>
        <dbReference type="HAMAP-Rule" id="MF_00047"/>
    </source>
</evidence>
<gene>
    <name evidence="2" type="primary">ddl</name>
    <name type="ordered locus">RALTA_A2727</name>
</gene>
<comment type="function">
    <text evidence="2">Cell wall formation.</text>
</comment>
<comment type="catalytic activity">
    <reaction evidence="2">
        <text>2 D-alanine + ATP = D-alanyl-D-alanine + ADP + phosphate + H(+)</text>
        <dbReference type="Rhea" id="RHEA:11224"/>
        <dbReference type="ChEBI" id="CHEBI:15378"/>
        <dbReference type="ChEBI" id="CHEBI:30616"/>
        <dbReference type="ChEBI" id="CHEBI:43474"/>
        <dbReference type="ChEBI" id="CHEBI:57416"/>
        <dbReference type="ChEBI" id="CHEBI:57822"/>
        <dbReference type="ChEBI" id="CHEBI:456216"/>
        <dbReference type="EC" id="6.3.2.4"/>
    </reaction>
</comment>
<comment type="cofactor">
    <cofactor evidence="1">
        <name>Mg(2+)</name>
        <dbReference type="ChEBI" id="CHEBI:18420"/>
    </cofactor>
    <cofactor evidence="1">
        <name>Mn(2+)</name>
        <dbReference type="ChEBI" id="CHEBI:29035"/>
    </cofactor>
    <text evidence="1">Binds 2 magnesium or manganese ions per subunit.</text>
</comment>
<comment type="pathway">
    <text evidence="2">Cell wall biogenesis; peptidoglycan biosynthesis.</text>
</comment>
<comment type="subcellular location">
    <subcellularLocation>
        <location evidence="2">Cytoplasm</location>
    </subcellularLocation>
</comment>
<comment type="similarity">
    <text evidence="2">Belongs to the D-alanine--D-alanine ligase family.</text>
</comment>
<keyword id="KW-0067">ATP-binding</keyword>
<keyword id="KW-0133">Cell shape</keyword>
<keyword id="KW-0961">Cell wall biogenesis/degradation</keyword>
<keyword id="KW-0963">Cytoplasm</keyword>
<keyword id="KW-0436">Ligase</keyword>
<keyword id="KW-0460">Magnesium</keyword>
<keyword id="KW-0464">Manganese</keyword>
<keyword id="KW-0479">Metal-binding</keyword>
<keyword id="KW-0547">Nucleotide-binding</keyword>
<keyword id="KW-0573">Peptidoglycan synthesis</keyword>
<proteinExistence type="inferred from homology"/>
<reference key="1">
    <citation type="journal article" date="2008" name="Genome Res.">
        <title>Genome sequence of the beta-rhizobium Cupriavidus taiwanensis and comparative genomics of rhizobia.</title>
        <authorList>
            <person name="Amadou C."/>
            <person name="Pascal G."/>
            <person name="Mangenot S."/>
            <person name="Glew M."/>
            <person name="Bontemps C."/>
            <person name="Capela D."/>
            <person name="Carrere S."/>
            <person name="Cruveiller S."/>
            <person name="Dossat C."/>
            <person name="Lajus A."/>
            <person name="Marchetti M."/>
            <person name="Poinsot V."/>
            <person name="Rouy Z."/>
            <person name="Servin B."/>
            <person name="Saad M."/>
            <person name="Schenowitz C."/>
            <person name="Barbe V."/>
            <person name="Batut J."/>
            <person name="Medigue C."/>
            <person name="Masson-Boivin C."/>
        </authorList>
    </citation>
    <scope>NUCLEOTIDE SEQUENCE [LARGE SCALE GENOMIC DNA]</scope>
    <source>
        <strain>DSM 17343 / BCRC 17206 / CCUG 44338 / CIP 107171 / LMG 19424 / R1</strain>
    </source>
</reference>
<accession>B3R6V7</accession>